<dbReference type="EMBL" id="AE005174">
    <property type="protein sequence ID" value="AAG58899.1"/>
    <property type="molecule type" value="Genomic_DNA"/>
</dbReference>
<dbReference type="EMBL" id="BA000007">
    <property type="protein sequence ID" value="BAB38060.1"/>
    <property type="molecule type" value="Genomic_DNA"/>
</dbReference>
<dbReference type="PIR" id="E91208">
    <property type="entry name" value="E91208"/>
</dbReference>
<dbReference type="PIR" id="G86054">
    <property type="entry name" value="G86054"/>
</dbReference>
<dbReference type="RefSeq" id="NP_312664.1">
    <property type="nucleotide sequence ID" value="NC_002695.1"/>
</dbReference>
<dbReference type="RefSeq" id="WP_000059116.1">
    <property type="nucleotide sequence ID" value="NZ_VOAI01000011.1"/>
</dbReference>
<dbReference type="SMR" id="Q8XBZ3"/>
<dbReference type="STRING" id="155864.Z5193"/>
<dbReference type="GeneID" id="913016"/>
<dbReference type="KEGG" id="ece:Z5193"/>
<dbReference type="KEGG" id="ecs:ECs_4637"/>
<dbReference type="PATRIC" id="fig|386585.9.peg.4847"/>
<dbReference type="eggNOG" id="COG0593">
    <property type="taxonomic scope" value="Bacteria"/>
</dbReference>
<dbReference type="HOGENOM" id="CLU_026910_0_1_6"/>
<dbReference type="OMA" id="DFIHFYQ"/>
<dbReference type="Proteomes" id="UP000000558">
    <property type="component" value="Chromosome"/>
</dbReference>
<dbReference type="Proteomes" id="UP000002519">
    <property type="component" value="Chromosome"/>
</dbReference>
<dbReference type="GO" id="GO:0005737">
    <property type="term" value="C:cytoplasm"/>
    <property type="evidence" value="ECO:0007669"/>
    <property type="project" value="UniProtKB-SubCell"/>
</dbReference>
<dbReference type="GO" id="GO:0005886">
    <property type="term" value="C:plasma membrane"/>
    <property type="evidence" value="ECO:0007669"/>
    <property type="project" value="TreeGrafter"/>
</dbReference>
<dbReference type="GO" id="GO:0005524">
    <property type="term" value="F:ATP binding"/>
    <property type="evidence" value="ECO:0007669"/>
    <property type="project" value="UniProtKB-UniRule"/>
</dbReference>
<dbReference type="GO" id="GO:0016887">
    <property type="term" value="F:ATP hydrolysis activity"/>
    <property type="evidence" value="ECO:0007669"/>
    <property type="project" value="InterPro"/>
</dbReference>
<dbReference type="GO" id="GO:0003688">
    <property type="term" value="F:DNA replication origin binding"/>
    <property type="evidence" value="ECO:0007669"/>
    <property type="project" value="UniProtKB-UniRule"/>
</dbReference>
<dbReference type="GO" id="GO:0008289">
    <property type="term" value="F:lipid binding"/>
    <property type="evidence" value="ECO:0007669"/>
    <property type="project" value="UniProtKB-KW"/>
</dbReference>
<dbReference type="GO" id="GO:0006270">
    <property type="term" value="P:DNA replication initiation"/>
    <property type="evidence" value="ECO:0007669"/>
    <property type="project" value="UniProtKB-UniRule"/>
</dbReference>
<dbReference type="GO" id="GO:0006275">
    <property type="term" value="P:regulation of DNA replication"/>
    <property type="evidence" value="ECO:0007669"/>
    <property type="project" value="UniProtKB-UniRule"/>
</dbReference>
<dbReference type="CDD" id="cd00009">
    <property type="entry name" value="AAA"/>
    <property type="match status" value="1"/>
</dbReference>
<dbReference type="CDD" id="cd06571">
    <property type="entry name" value="Bac_DnaA_C"/>
    <property type="match status" value="1"/>
</dbReference>
<dbReference type="FunFam" id="1.10.1750.10:FF:000001">
    <property type="entry name" value="Chromosomal replication initiator protein DnaA"/>
    <property type="match status" value="1"/>
</dbReference>
<dbReference type="FunFam" id="1.10.8.60:FF:000003">
    <property type="entry name" value="Chromosomal replication initiator protein DnaA"/>
    <property type="match status" value="1"/>
</dbReference>
<dbReference type="FunFam" id="3.30.300.180:FF:000001">
    <property type="entry name" value="Chromosomal replication initiator protein DnaA"/>
    <property type="match status" value="1"/>
</dbReference>
<dbReference type="FunFam" id="3.40.50.300:FF:000103">
    <property type="entry name" value="Chromosomal replication initiator protein DnaA"/>
    <property type="match status" value="1"/>
</dbReference>
<dbReference type="Gene3D" id="1.10.1750.10">
    <property type="match status" value="1"/>
</dbReference>
<dbReference type="Gene3D" id="1.10.8.60">
    <property type="match status" value="1"/>
</dbReference>
<dbReference type="Gene3D" id="3.30.300.180">
    <property type="match status" value="1"/>
</dbReference>
<dbReference type="Gene3D" id="3.40.50.300">
    <property type="entry name" value="P-loop containing nucleotide triphosphate hydrolases"/>
    <property type="match status" value="1"/>
</dbReference>
<dbReference type="HAMAP" id="MF_00377">
    <property type="entry name" value="DnaA_bact"/>
    <property type="match status" value="1"/>
</dbReference>
<dbReference type="InterPro" id="IPR003593">
    <property type="entry name" value="AAA+_ATPase"/>
</dbReference>
<dbReference type="InterPro" id="IPR001957">
    <property type="entry name" value="Chromosome_initiator_DnaA"/>
</dbReference>
<dbReference type="InterPro" id="IPR020591">
    <property type="entry name" value="Chromosome_initiator_DnaA-like"/>
</dbReference>
<dbReference type="InterPro" id="IPR018312">
    <property type="entry name" value="Chromosome_initiator_DnaA_CS"/>
</dbReference>
<dbReference type="InterPro" id="IPR013159">
    <property type="entry name" value="DnaA_C"/>
</dbReference>
<dbReference type="InterPro" id="IPR013317">
    <property type="entry name" value="DnaA_dom"/>
</dbReference>
<dbReference type="InterPro" id="IPR024633">
    <property type="entry name" value="DnaA_N_dom"/>
</dbReference>
<dbReference type="InterPro" id="IPR038454">
    <property type="entry name" value="DnaA_N_sf"/>
</dbReference>
<dbReference type="InterPro" id="IPR027417">
    <property type="entry name" value="P-loop_NTPase"/>
</dbReference>
<dbReference type="InterPro" id="IPR010921">
    <property type="entry name" value="Trp_repressor/repl_initiator"/>
</dbReference>
<dbReference type="NCBIfam" id="TIGR00362">
    <property type="entry name" value="DnaA"/>
    <property type="match status" value="1"/>
</dbReference>
<dbReference type="PANTHER" id="PTHR30050">
    <property type="entry name" value="CHROMOSOMAL REPLICATION INITIATOR PROTEIN DNAA"/>
    <property type="match status" value="1"/>
</dbReference>
<dbReference type="PANTHER" id="PTHR30050:SF2">
    <property type="entry name" value="CHROMOSOMAL REPLICATION INITIATOR PROTEIN DNAA"/>
    <property type="match status" value="1"/>
</dbReference>
<dbReference type="Pfam" id="PF00308">
    <property type="entry name" value="Bac_DnaA"/>
    <property type="match status" value="1"/>
</dbReference>
<dbReference type="Pfam" id="PF08299">
    <property type="entry name" value="Bac_DnaA_C"/>
    <property type="match status" value="1"/>
</dbReference>
<dbReference type="Pfam" id="PF11638">
    <property type="entry name" value="DnaA_N"/>
    <property type="match status" value="1"/>
</dbReference>
<dbReference type="PRINTS" id="PR00051">
    <property type="entry name" value="DNAA"/>
</dbReference>
<dbReference type="SMART" id="SM00382">
    <property type="entry name" value="AAA"/>
    <property type="match status" value="1"/>
</dbReference>
<dbReference type="SMART" id="SM00760">
    <property type="entry name" value="Bac_DnaA_C"/>
    <property type="match status" value="1"/>
</dbReference>
<dbReference type="SUPFAM" id="SSF52540">
    <property type="entry name" value="P-loop containing nucleoside triphosphate hydrolases"/>
    <property type="match status" value="1"/>
</dbReference>
<dbReference type="SUPFAM" id="SSF48295">
    <property type="entry name" value="TrpR-like"/>
    <property type="match status" value="1"/>
</dbReference>
<dbReference type="PROSITE" id="PS01008">
    <property type="entry name" value="DNAA"/>
    <property type="match status" value="1"/>
</dbReference>
<comment type="function">
    <text evidence="1">Plays an essential role in the initiation and regulation of chromosomal replication. ATP-DnaA binds to the origin of replication (oriC) to initiate formation of the DNA replication initiation complex once per cell cycle. Binds the DnaA box (a 9 base pair repeat at the origin) and separates the double-stranded (ds)DNA. Forms a right-handed helical filament on oriC DNA; dsDNA binds to the exterior of the filament while single-stranded (ss)DNA is stabiized in the filament's interior. The ATP-DnaA-oriC complex binds and stabilizes one strand of the AT-rich DNA unwinding element (DUE), permitting loading of DNA polymerase. After initiation quickly degrades to an ADP-DnaA complex that is not apt for DNA replication. Binds acidic phospholipids.</text>
</comment>
<comment type="subunit">
    <text evidence="1">Oligomerizes as a right-handed, spiral filament on DNA at oriC.</text>
</comment>
<comment type="subcellular location">
    <subcellularLocation>
        <location evidence="1">Cytoplasm</location>
    </subcellularLocation>
</comment>
<comment type="domain">
    <text evidence="1">Domain I is involved in oligomerization and binding regulators, domain II is flexibile and of varying length in different bacteria, domain III forms the AAA+ region, while domain IV binds dsDNA.</text>
</comment>
<comment type="similarity">
    <text evidence="1">Belongs to the DnaA family.</text>
</comment>
<keyword id="KW-0067">ATP-binding</keyword>
<keyword id="KW-0963">Cytoplasm</keyword>
<keyword id="KW-0235">DNA replication</keyword>
<keyword id="KW-0238">DNA-binding</keyword>
<keyword id="KW-0446">Lipid-binding</keyword>
<keyword id="KW-0547">Nucleotide-binding</keyword>
<keyword id="KW-1185">Reference proteome</keyword>
<feature type="chain" id="PRO_0000114175" description="Chromosomal replication initiator protein DnaA">
    <location>
        <begin position="1"/>
        <end position="467"/>
    </location>
</feature>
<feature type="region of interest" description="Domain I, interacts with DnaA modulators" evidence="1">
    <location>
        <begin position="1"/>
        <end position="90"/>
    </location>
</feature>
<feature type="region of interest" description="Domain II" evidence="1">
    <location>
        <begin position="91"/>
        <end position="130"/>
    </location>
</feature>
<feature type="region of interest" description="Disordered" evidence="2">
    <location>
        <begin position="97"/>
        <end position="119"/>
    </location>
</feature>
<feature type="region of interest" description="Domain III, AAA+ region" evidence="1">
    <location>
        <begin position="131"/>
        <end position="347"/>
    </location>
</feature>
<feature type="region of interest" description="Domain IV, binds dsDNA" evidence="1">
    <location>
        <begin position="348"/>
        <end position="467"/>
    </location>
</feature>
<feature type="compositionally biased region" description="Low complexity" evidence="2">
    <location>
        <begin position="97"/>
        <end position="111"/>
    </location>
</feature>
<feature type="binding site" evidence="1">
    <location>
        <position position="175"/>
    </location>
    <ligand>
        <name>ATP</name>
        <dbReference type="ChEBI" id="CHEBI:30616"/>
    </ligand>
</feature>
<feature type="binding site" evidence="1">
    <location>
        <position position="177"/>
    </location>
    <ligand>
        <name>ATP</name>
        <dbReference type="ChEBI" id="CHEBI:30616"/>
    </ligand>
</feature>
<feature type="binding site" evidence="1">
    <location>
        <position position="178"/>
    </location>
    <ligand>
        <name>ATP</name>
        <dbReference type="ChEBI" id="CHEBI:30616"/>
    </ligand>
</feature>
<feature type="binding site" evidence="1">
    <location>
        <position position="179"/>
    </location>
    <ligand>
        <name>ATP</name>
        <dbReference type="ChEBI" id="CHEBI:30616"/>
    </ligand>
</feature>
<sequence>MSLSLWQQCLARLQDELPATEFSMWIRPLQAELSDNTLALYAPNRFVLDWVRDKYLNNINGLLTSFCGADAPQLRFEVGTKSVTQTPQAAVTSNVAAPAQVAQTQPQRAAPSTRSGWDNVPAPAEPTYRSNVNVKHTFDNFVEGKSNQLARAAARQVADNPGGAYNPLFLYGGTGLGKTHLLHAVGNGIMARKPNAKVVYMHSERFVQDMVKALQNNAIEEFKRYYRSVDALLIDDIQFFANKERSQEEFFHTFNALLEGNQQIILTSDRYPKEINGVEDRLKSRFGWGLTVAIEPPELETRVAILMKKADENDIRLPGEVAFFIAKRLRSNVRELEGALNRVIANANFTGRAITIDFVREALRDLLALQEKLVTIDNIQKTVAEYYKIKVADLLSKRRSRSVARPRQMAMALAKELTNHSLPEIGDAFGGRDHTTVLHACRKIEQLREESHDIKEDFSNLIRTLSS</sequence>
<gene>
    <name evidence="1" type="primary">dnaA</name>
    <name type="ordered locus">Z5193</name>
    <name type="ordered locus">ECs4637</name>
</gene>
<protein>
    <recommendedName>
        <fullName evidence="1">Chromosomal replication initiator protein DnaA</fullName>
    </recommendedName>
</protein>
<accession>Q8XBZ3</accession>
<reference key="1">
    <citation type="journal article" date="2001" name="Nature">
        <title>Genome sequence of enterohaemorrhagic Escherichia coli O157:H7.</title>
        <authorList>
            <person name="Perna N.T."/>
            <person name="Plunkett G. III"/>
            <person name="Burland V."/>
            <person name="Mau B."/>
            <person name="Glasner J.D."/>
            <person name="Rose D.J."/>
            <person name="Mayhew G.F."/>
            <person name="Evans P.S."/>
            <person name="Gregor J."/>
            <person name="Kirkpatrick H.A."/>
            <person name="Posfai G."/>
            <person name="Hackett J."/>
            <person name="Klink S."/>
            <person name="Boutin A."/>
            <person name="Shao Y."/>
            <person name="Miller L."/>
            <person name="Grotbeck E.J."/>
            <person name="Davis N.W."/>
            <person name="Lim A."/>
            <person name="Dimalanta E.T."/>
            <person name="Potamousis K."/>
            <person name="Apodaca J."/>
            <person name="Anantharaman T.S."/>
            <person name="Lin J."/>
            <person name="Yen G."/>
            <person name="Schwartz D.C."/>
            <person name="Welch R.A."/>
            <person name="Blattner F.R."/>
        </authorList>
    </citation>
    <scope>NUCLEOTIDE SEQUENCE [LARGE SCALE GENOMIC DNA]</scope>
    <source>
        <strain>O157:H7 / EDL933 / ATCC 700927 / EHEC</strain>
    </source>
</reference>
<reference key="2">
    <citation type="journal article" date="2001" name="DNA Res.">
        <title>Complete genome sequence of enterohemorrhagic Escherichia coli O157:H7 and genomic comparison with a laboratory strain K-12.</title>
        <authorList>
            <person name="Hayashi T."/>
            <person name="Makino K."/>
            <person name="Ohnishi M."/>
            <person name="Kurokawa K."/>
            <person name="Ishii K."/>
            <person name="Yokoyama K."/>
            <person name="Han C.-G."/>
            <person name="Ohtsubo E."/>
            <person name="Nakayama K."/>
            <person name="Murata T."/>
            <person name="Tanaka M."/>
            <person name="Tobe T."/>
            <person name="Iida T."/>
            <person name="Takami H."/>
            <person name="Honda T."/>
            <person name="Sasakawa C."/>
            <person name="Ogasawara N."/>
            <person name="Yasunaga T."/>
            <person name="Kuhara S."/>
            <person name="Shiba T."/>
            <person name="Hattori M."/>
            <person name="Shinagawa H."/>
        </authorList>
    </citation>
    <scope>NUCLEOTIDE SEQUENCE [LARGE SCALE GENOMIC DNA]</scope>
    <source>
        <strain>O157:H7 / Sakai / RIMD 0509952 / EHEC</strain>
    </source>
</reference>
<proteinExistence type="inferred from homology"/>
<name>DNAA_ECO57</name>
<organism>
    <name type="scientific">Escherichia coli O157:H7</name>
    <dbReference type="NCBI Taxonomy" id="83334"/>
    <lineage>
        <taxon>Bacteria</taxon>
        <taxon>Pseudomonadati</taxon>
        <taxon>Pseudomonadota</taxon>
        <taxon>Gammaproteobacteria</taxon>
        <taxon>Enterobacterales</taxon>
        <taxon>Enterobacteriaceae</taxon>
        <taxon>Escherichia</taxon>
    </lineage>
</organism>
<evidence type="ECO:0000255" key="1">
    <source>
        <dbReference type="HAMAP-Rule" id="MF_00377"/>
    </source>
</evidence>
<evidence type="ECO:0000256" key="2">
    <source>
        <dbReference type="SAM" id="MobiDB-lite"/>
    </source>
</evidence>